<proteinExistence type="inferred from homology"/>
<comment type="function">
    <text evidence="1">Binds to 23S rRNA. Forms part of two intersubunit bridges in the 70S ribosome.</text>
</comment>
<comment type="subunit">
    <text evidence="1">Part of the 50S ribosomal subunit. Forms a cluster with proteins L3 and L19. In the 70S ribosome, L14 and L19 interact and together make contacts with the 16S rRNA in bridges B5 and B8.</text>
</comment>
<comment type="similarity">
    <text evidence="1">Belongs to the universal ribosomal protein uL14 family.</text>
</comment>
<accession>B2UYC0</accession>
<protein>
    <recommendedName>
        <fullName evidence="1">Large ribosomal subunit protein uL14</fullName>
    </recommendedName>
    <alternativeName>
        <fullName evidence="2">50S ribosomal protein L14</fullName>
    </alternativeName>
</protein>
<keyword id="KW-0687">Ribonucleoprotein</keyword>
<keyword id="KW-0689">Ribosomal protein</keyword>
<keyword id="KW-0694">RNA-binding</keyword>
<keyword id="KW-0699">rRNA-binding</keyword>
<feature type="chain" id="PRO_1000144244" description="Large ribosomal subunit protein uL14">
    <location>
        <begin position="1"/>
        <end position="122"/>
    </location>
</feature>
<organism>
    <name type="scientific">Clostridium botulinum (strain Alaska E43 / Type E3)</name>
    <dbReference type="NCBI Taxonomy" id="508767"/>
    <lineage>
        <taxon>Bacteria</taxon>
        <taxon>Bacillati</taxon>
        <taxon>Bacillota</taxon>
        <taxon>Clostridia</taxon>
        <taxon>Eubacteriales</taxon>
        <taxon>Clostridiaceae</taxon>
        <taxon>Clostridium</taxon>
    </lineage>
</organism>
<dbReference type="EMBL" id="CP001078">
    <property type="protein sequence ID" value="ACD51850.1"/>
    <property type="molecule type" value="Genomic_DNA"/>
</dbReference>
<dbReference type="RefSeq" id="WP_003373072.1">
    <property type="nucleotide sequence ID" value="NC_010723.1"/>
</dbReference>
<dbReference type="SMR" id="B2UYC0"/>
<dbReference type="KEGG" id="cbt:CLH_0247"/>
<dbReference type="HOGENOM" id="CLU_095071_2_1_9"/>
<dbReference type="GO" id="GO:0022625">
    <property type="term" value="C:cytosolic large ribosomal subunit"/>
    <property type="evidence" value="ECO:0007669"/>
    <property type="project" value="TreeGrafter"/>
</dbReference>
<dbReference type="GO" id="GO:0070180">
    <property type="term" value="F:large ribosomal subunit rRNA binding"/>
    <property type="evidence" value="ECO:0007669"/>
    <property type="project" value="TreeGrafter"/>
</dbReference>
<dbReference type="GO" id="GO:0003735">
    <property type="term" value="F:structural constituent of ribosome"/>
    <property type="evidence" value="ECO:0007669"/>
    <property type="project" value="InterPro"/>
</dbReference>
<dbReference type="GO" id="GO:0006412">
    <property type="term" value="P:translation"/>
    <property type="evidence" value="ECO:0007669"/>
    <property type="project" value="UniProtKB-UniRule"/>
</dbReference>
<dbReference type="CDD" id="cd00337">
    <property type="entry name" value="Ribosomal_uL14"/>
    <property type="match status" value="1"/>
</dbReference>
<dbReference type="FunFam" id="2.40.150.20:FF:000001">
    <property type="entry name" value="50S ribosomal protein L14"/>
    <property type="match status" value="1"/>
</dbReference>
<dbReference type="Gene3D" id="2.40.150.20">
    <property type="entry name" value="Ribosomal protein L14"/>
    <property type="match status" value="1"/>
</dbReference>
<dbReference type="HAMAP" id="MF_01367">
    <property type="entry name" value="Ribosomal_uL14"/>
    <property type="match status" value="1"/>
</dbReference>
<dbReference type="InterPro" id="IPR000218">
    <property type="entry name" value="Ribosomal_uL14"/>
</dbReference>
<dbReference type="InterPro" id="IPR005745">
    <property type="entry name" value="Ribosomal_uL14_bac-type"/>
</dbReference>
<dbReference type="InterPro" id="IPR019972">
    <property type="entry name" value="Ribosomal_uL14_CS"/>
</dbReference>
<dbReference type="InterPro" id="IPR036853">
    <property type="entry name" value="Ribosomal_uL14_sf"/>
</dbReference>
<dbReference type="NCBIfam" id="TIGR01067">
    <property type="entry name" value="rplN_bact"/>
    <property type="match status" value="1"/>
</dbReference>
<dbReference type="PANTHER" id="PTHR11761">
    <property type="entry name" value="50S/60S RIBOSOMAL PROTEIN L14/L23"/>
    <property type="match status" value="1"/>
</dbReference>
<dbReference type="PANTHER" id="PTHR11761:SF3">
    <property type="entry name" value="LARGE RIBOSOMAL SUBUNIT PROTEIN UL14M"/>
    <property type="match status" value="1"/>
</dbReference>
<dbReference type="Pfam" id="PF00238">
    <property type="entry name" value="Ribosomal_L14"/>
    <property type="match status" value="1"/>
</dbReference>
<dbReference type="SMART" id="SM01374">
    <property type="entry name" value="Ribosomal_L14"/>
    <property type="match status" value="1"/>
</dbReference>
<dbReference type="SUPFAM" id="SSF50193">
    <property type="entry name" value="Ribosomal protein L14"/>
    <property type="match status" value="1"/>
</dbReference>
<dbReference type="PROSITE" id="PS00049">
    <property type="entry name" value="RIBOSOMAL_L14"/>
    <property type="match status" value="1"/>
</dbReference>
<sequence length="122" mass="13190">MIQPQTLLKVADNSGAKEIMCIRVLGGSKRKFGNISDVIVASVKSATPGGVVKKGEVVKAVIVRSAKGLRRADGSYIKFDENAAVIIKDDKQPRGTRIFGPVARELRDKEFNKILSLAPEVL</sequence>
<gene>
    <name evidence="1" type="primary">rplN</name>
    <name type="ordered locus">CLH_0247</name>
</gene>
<reference key="1">
    <citation type="submission" date="2008-05" db="EMBL/GenBank/DDBJ databases">
        <title>Complete genome sequence of Clostridium botulinum E3 str. Alaska E43.</title>
        <authorList>
            <person name="Brinkac L.M."/>
            <person name="Brown J.L."/>
            <person name="Bruce D."/>
            <person name="Detter C."/>
            <person name="Munk C."/>
            <person name="Smith L.A."/>
            <person name="Smith T.J."/>
            <person name="Sutton G."/>
            <person name="Brettin T.S."/>
        </authorList>
    </citation>
    <scope>NUCLEOTIDE SEQUENCE [LARGE SCALE GENOMIC DNA]</scope>
    <source>
        <strain>Alaska E43 / Type E3</strain>
    </source>
</reference>
<name>RL14_CLOBA</name>
<evidence type="ECO:0000255" key="1">
    <source>
        <dbReference type="HAMAP-Rule" id="MF_01367"/>
    </source>
</evidence>
<evidence type="ECO:0000305" key="2"/>